<dbReference type="EMBL" id="AP009152">
    <property type="protein sequence ID" value="BAG29315.1"/>
    <property type="molecule type" value="Genomic_DNA"/>
</dbReference>
<dbReference type="RefSeq" id="WP_012398036.1">
    <property type="nucleotide sequence ID" value="NC_010617.1"/>
</dbReference>
<dbReference type="SMR" id="B2GLX4"/>
<dbReference type="STRING" id="378753.KRH_09680"/>
<dbReference type="KEGG" id="krh:KRH_09680"/>
<dbReference type="eggNOG" id="COG0216">
    <property type="taxonomic scope" value="Bacteria"/>
</dbReference>
<dbReference type="HOGENOM" id="CLU_036856_0_1_11"/>
<dbReference type="OrthoDB" id="9806673at2"/>
<dbReference type="Proteomes" id="UP000008838">
    <property type="component" value="Chromosome"/>
</dbReference>
<dbReference type="GO" id="GO:0005737">
    <property type="term" value="C:cytoplasm"/>
    <property type="evidence" value="ECO:0007669"/>
    <property type="project" value="UniProtKB-SubCell"/>
</dbReference>
<dbReference type="GO" id="GO:0016149">
    <property type="term" value="F:translation release factor activity, codon specific"/>
    <property type="evidence" value="ECO:0007669"/>
    <property type="project" value="UniProtKB-UniRule"/>
</dbReference>
<dbReference type="FunFam" id="3.30.160.20:FF:000004">
    <property type="entry name" value="Peptide chain release factor 1"/>
    <property type="match status" value="1"/>
</dbReference>
<dbReference type="Gene3D" id="3.30.160.20">
    <property type="match status" value="1"/>
</dbReference>
<dbReference type="Gene3D" id="3.30.70.1660">
    <property type="match status" value="1"/>
</dbReference>
<dbReference type="Gene3D" id="6.10.140.1950">
    <property type="match status" value="1"/>
</dbReference>
<dbReference type="HAMAP" id="MF_00093">
    <property type="entry name" value="Rel_fac_1"/>
    <property type="match status" value="1"/>
</dbReference>
<dbReference type="InterPro" id="IPR005139">
    <property type="entry name" value="PCRF"/>
</dbReference>
<dbReference type="InterPro" id="IPR000352">
    <property type="entry name" value="Pep_chain_release_fac_I"/>
</dbReference>
<dbReference type="InterPro" id="IPR045853">
    <property type="entry name" value="Pep_chain_release_fac_I_sf"/>
</dbReference>
<dbReference type="InterPro" id="IPR050057">
    <property type="entry name" value="Prokaryotic/Mito_RF"/>
</dbReference>
<dbReference type="InterPro" id="IPR004373">
    <property type="entry name" value="RF-1"/>
</dbReference>
<dbReference type="NCBIfam" id="TIGR00019">
    <property type="entry name" value="prfA"/>
    <property type="match status" value="1"/>
</dbReference>
<dbReference type="NCBIfam" id="NF001859">
    <property type="entry name" value="PRK00591.1"/>
    <property type="match status" value="1"/>
</dbReference>
<dbReference type="PANTHER" id="PTHR43804">
    <property type="entry name" value="LD18447P"/>
    <property type="match status" value="1"/>
</dbReference>
<dbReference type="PANTHER" id="PTHR43804:SF7">
    <property type="entry name" value="LD18447P"/>
    <property type="match status" value="1"/>
</dbReference>
<dbReference type="Pfam" id="PF03462">
    <property type="entry name" value="PCRF"/>
    <property type="match status" value="1"/>
</dbReference>
<dbReference type="Pfam" id="PF00472">
    <property type="entry name" value="RF-1"/>
    <property type="match status" value="1"/>
</dbReference>
<dbReference type="SMART" id="SM00937">
    <property type="entry name" value="PCRF"/>
    <property type="match status" value="1"/>
</dbReference>
<dbReference type="SUPFAM" id="SSF75620">
    <property type="entry name" value="Release factor"/>
    <property type="match status" value="1"/>
</dbReference>
<dbReference type="PROSITE" id="PS00745">
    <property type="entry name" value="RF_PROK_I"/>
    <property type="match status" value="1"/>
</dbReference>
<reference key="1">
    <citation type="journal article" date="2008" name="J. Bacteriol.">
        <title>Complete genome sequence of the soil actinomycete Kocuria rhizophila.</title>
        <authorList>
            <person name="Takarada H."/>
            <person name="Sekine M."/>
            <person name="Kosugi H."/>
            <person name="Matsuo Y."/>
            <person name="Fujisawa T."/>
            <person name="Omata S."/>
            <person name="Kishi E."/>
            <person name="Shimizu A."/>
            <person name="Tsukatani N."/>
            <person name="Tanikawa S."/>
            <person name="Fujita N."/>
            <person name="Harayama S."/>
        </authorList>
    </citation>
    <scope>NUCLEOTIDE SEQUENCE [LARGE SCALE GENOMIC DNA]</scope>
    <source>
        <strain>ATCC 9341 / DSM 348 / NBRC 103217 / DC2201</strain>
    </source>
</reference>
<sequence length="369" mass="40651">MSDPVQPLLDEHAQLQRELADPAVHADAGRARKLGRRYSELNGIVEAHRRVERLSEDLEAARELGSMDPELAAEVKPLEEELAVAREALRRKLVPRDPDDGRNVILEVKAGEGGDESALFAGDLLRMYMRFAEQSGLKTEILSSTPTELGGYKDVQLAVKGSSSDPSEGAWARFKYEGGVHRVQRVPVTESQGRVHTSAAGVLVFPEVDEPDEIDISQNDLKIDVYRSSGPGGQSVNTTDSAVRITHVPTGIVVSMQNEKSQLQNREAAMRVLRARLLAHQQEQIDAENAAARKSQVRTVDRSERIRTYNFPENRIADHRTGYKAYNLDHVLDGALEPVIASAVELDEKARLEQLGQDSAEQGSAGRRG</sequence>
<keyword id="KW-0963">Cytoplasm</keyword>
<keyword id="KW-0488">Methylation</keyword>
<keyword id="KW-0648">Protein biosynthesis</keyword>
<keyword id="KW-1185">Reference proteome</keyword>
<name>RF1_KOCRD</name>
<feature type="chain" id="PRO_1000093466" description="Peptide chain release factor 1">
    <location>
        <begin position="1"/>
        <end position="369"/>
    </location>
</feature>
<feature type="modified residue" description="N5-methylglutamine" evidence="1">
    <location>
        <position position="234"/>
    </location>
</feature>
<comment type="function">
    <text evidence="1">Peptide chain release factor 1 directs the termination of translation in response to the peptide chain termination codons UAG and UAA.</text>
</comment>
<comment type="subcellular location">
    <subcellularLocation>
        <location evidence="1">Cytoplasm</location>
    </subcellularLocation>
</comment>
<comment type="PTM">
    <text evidence="1">Methylated by PrmC. Methylation increases the termination efficiency of RF1.</text>
</comment>
<comment type="similarity">
    <text evidence="1">Belongs to the prokaryotic/mitochondrial release factor family.</text>
</comment>
<accession>B2GLX4</accession>
<protein>
    <recommendedName>
        <fullName evidence="1">Peptide chain release factor 1</fullName>
        <shortName evidence="1">RF-1</shortName>
    </recommendedName>
</protein>
<evidence type="ECO:0000255" key="1">
    <source>
        <dbReference type="HAMAP-Rule" id="MF_00093"/>
    </source>
</evidence>
<organism>
    <name type="scientific">Kocuria rhizophila (strain ATCC 9341 / DSM 348 / NBRC 103217 / DC2201)</name>
    <dbReference type="NCBI Taxonomy" id="378753"/>
    <lineage>
        <taxon>Bacteria</taxon>
        <taxon>Bacillati</taxon>
        <taxon>Actinomycetota</taxon>
        <taxon>Actinomycetes</taxon>
        <taxon>Micrococcales</taxon>
        <taxon>Micrococcaceae</taxon>
        <taxon>Kocuria</taxon>
    </lineage>
</organism>
<proteinExistence type="inferred from homology"/>
<gene>
    <name evidence="1" type="primary">prfA</name>
    <name type="ordered locus">KRH_09680</name>
</gene>